<evidence type="ECO:0000255" key="1">
    <source>
        <dbReference type="HAMAP-Rule" id="MF_00071"/>
    </source>
</evidence>
<sequence length="595" mass="67080">METIRNFSIIAHVDHGKSTISDRLIQICGGLSKREMHSQVLDSMDLEKERGITIKSQSVTIEYKSKCNKIIQMNFIDTPGHVDFSYEVSRSLSACEGALLIIDATQGVEAQTIANCHTALDMNLKVIPILNKIDLPTADPQRVKKEIEDIIGLSTNNIILCSAKTGTGITNLLETITHNIPYPKGNPNDPLQALIIDSWFDCYLGVVSLVRVKNGYLTKKTKIQIMSTKKIYNIEKIGIFTPKPIFKDILKCGEVGWIICGIRNITGAPVGDTITQHPNSAKKVLSGFKKIKPKIYAGLFTIQSNQFSLFRDALGKLSLNDASLFYEPEHSLALGHGFRCGFLGILHMEIVQARLEREYNLQIIATSPTVIYKIIMIDNTNYYLDTPHKLSTLQKIKEIREPIAKCLILLPIKYLGNTLLLCSQRRGVQNDISYYNNQILLDYSIPMSEVVLNFFDQLKSVSSGYASLEYNFELYKVAHVKCLDILVNYKKIDSLSTIVHKTKILNQAKNVVEKMKNLIPRHQFDIIIQAVIGTKVIVRTTIKQLRKNVLAKCYGGDVTRKKKLLKKQKIGKKRMKQIGNITIPQEVFLKILNNN</sequence>
<reference key="1">
    <citation type="journal article" date="2003" name="Proc. Natl. Acad. Sci. U.S.A.">
        <title>Reductive genome evolution in Buchnera aphidicola.</title>
        <authorList>
            <person name="van Ham R.C.H.J."/>
            <person name="Kamerbeek J."/>
            <person name="Palacios C."/>
            <person name="Rausell C."/>
            <person name="Abascal F."/>
            <person name="Bastolla U."/>
            <person name="Fernandez J.M."/>
            <person name="Jimenez L."/>
            <person name="Postigo M."/>
            <person name="Silva F.J."/>
            <person name="Tamames J."/>
            <person name="Viguera E."/>
            <person name="Latorre A."/>
            <person name="Valencia A."/>
            <person name="Moran F."/>
            <person name="Moya A."/>
        </authorList>
    </citation>
    <scope>NUCLEOTIDE SEQUENCE [LARGE SCALE GENOMIC DNA]</scope>
    <source>
        <strain>Bp</strain>
    </source>
</reference>
<dbReference type="EC" id="3.6.5.n1" evidence="1"/>
<dbReference type="EMBL" id="AE016826">
    <property type="protein sequence ID" value="AAO26968.1"/>
    <property type="molecule type" value="Genomic_DNA"/>
</dbReference>
<dbReference type="RefSeq" id="WP_011091369.1">
    <property type="nucleotide sequence ID" value="NC_004545.1"/>
</dbReference>
<dbReference type="SMR" id="Q89AM5"/>
<dbReference type="STRING" id="224915.bbp_241"/>
<dbReference type="KEGG" id="bab:bbp_241"/>
<dbReference type="eggNOG" id="COG0481">
    <property type="taxonomic scope" value="Bacteria"/>
</dbReference>
<dbReference type="HOGENOM" id="CLU_009995_3_3_6"/>
<dbReference type="OrthoDB" id="9804431at2"/>
<dbReference type="Proteomes" id="UP000000601">
    <property type="component" value="Chromosome"/>
</dbReference>
<dbReference type="GO" id="GO:0005886">
    <property type="term" value="C:plasma membrane"/>
    <property type="evidence" value="ECO:0007669"/>
    <property type="project" value="UniProtKB-SubCell"/>
</dbReference>
<dbReference type="GO" id="GO:0005525">
    <property type="term" value="F:GTP binding"/>
    <property type="evidence" value="ECO:0007669"/>
    <property type="project" value="UniProtKB-UniRule"/>
</dbReference>
<dbReference type="GO" id="GO:0003924">
    <property type="term" value="F:GTPase activity"/>
    <property type="evidence" value="ECO:0007669"/>
    <property type="project" value="UniProtKB-UniRule"/>
</dbReference>
<dbReference type="GO" id="GO:0097216">
    <property type="term" value="F:guanosine tetraphosphate binding"/>
    <property type="evidence" value="ECO:0007669"/>
    <property type="project" value="UniProtKB-ARBA"/>
</dbReference>
<dbReference type="GO" id="GO:0043022">
    <property type="term" value="F:ribosome binding"/>
    <property type="evidence" value="ECO:0007669"/>
    <property type="project" value="UniProtKB-UniRule"/>
</dbReference>
<dbReference type="GO" id="GO:0003746">
    <property type="term" value="F:translation elongation factor activity"/>
    <property type="evidence" value="ECO:0007669"/>
    <property type="project" value="UniProtKB-UniRule"/>
</dbReference>
<dbReference type="GO" id="GO:0045727">
    <property type="term" value="P:positive regulation of translation"/>
    <property type="evidence" value="ECO:0007669"/>
    <property type="project" value="UniProtKB-UniRule"/>
</dbReference>
<dbReference type="CDD" id="cd03699">
    <property type="entry name" value="EF4_II"/>
    <property type="match status" value="1"/>
</dbReference>
<dbReference type="CDD" id="cd16260">
    <property type="entry name" value="EF4_III"/>
    <property type="match status" value="1"/>
</dbReference>
<dbReference type="CDD" id="cd01890">
    <property type="entry name" value="LepA"/>
    <property type="match status" value="1"/>
</dbReference>
<dbReference type="CDD" id="cd03709">
    <property type="entry name" value="lepA_C"/>
    <property type="match status" value="1"/>
</dbReference>
<dbReference type="FunFam" id="3.40.50.300:FF:000078">
    <property type="entry name" value="Elongation factor 4"/>
    <property type="match status" value="1"/>
</dbReference>
<dbReference type="FunFam" id="2.40.30.10:FF:000015">
    <property type="entry name" value="Translation factor GUF1, mitochondrial"/>
    <property type="match status" value="1"/>
</dbReference>
<dbReference type="FunFam" id="3.30.70.2570:FF:000001">
    <property type="entry name" value="Translation factor GUF1, mitochondrial"/>
    <property type="match status" value="1"/>
</dbReference>
<dbReference type="FunFam" id="3.30.70.870:FF:000004">
    <property type="entry name" value="Translation factor GUF1, mitochondrial"/>
    <property type="match status" value="1"/>
</dbReference>
<dbReference type="Gene3D" id="3.30.70.240">
    <property type="match status" value="1"/>
</dbReference>
<dbReference type="Gene3D" id="3.30.70.2570">
    <property type="entry name" value="Elongation factor 4, C-terminal domain"/>
    <property type="match status" value="1"/>
</dbReference>
<dbReference type="Gene3D" id="3.30.70.870">
    <property type="entry name" value="Elongation Factor G (Translational Gtpase), domain 3"/>
    <property type="match status" value="1"/>
</dbReference>
<dbReference type="Gene3D" id="3.40.50.300">
    <property type="entry name" value="P-loop containing nucleotide triphosphate hydrolases"/>
    <property type="match status" value="1"/>
</dbReference>
<dbReference type="Gene3D" id="2.40.30.10">
    <property type="entry name" value="Translation factors"/>
    <property type="match status" value="1"/>
</dbReference>
<dbReference type="HAMAP" id="MF_00071">
    <property type="entry name" value="LepA"/>
    <property type="match status" value="1"/>
</dbReference>
<dbReference type="InterPro" id="IPR006297">
    <property type="entry name" value="EF-4"/>
</dbReference>
<dbReference type="InterPro" id="IPR035647">
    <property type="entry name" value="EFG_III/V"/>
</dbReference>
<dbReference type="InterPro" id="IPR000640">
    <property type="entry name" value="EFG_V-like"/>
</dbReference>
<dbReference type="InterPro" id="IPR004161">
    <property type="entry name" value="EFTu-like_2"/>
</dbReference>
<dbReference type="InterPro" id="IPR031157">
    <property type="entry name" value="G_TR_CS"/>
</dbReference>
<dbReference type="InterPro" id="IPR038363">
    <property type="entry name" value="LepA_C_sf"/>
</dbReference>
<dbReference type="InterPro" id="IPR013842">
    <property type="entry name" value="LepA_CTD"/>
</dbReference>
<dbReference type="InterPro" id="IPR035654">
    <property type="entry name" value="LepA_IV"/>
</dbReference>
<dbReference type="InterPro" id="IPR027417">
    <property type="entry name" value="P-loop_NTPase"/>
</dbReference>
<dbReference type="InterPro" id="IPR005225">
    <property type="entry name" value="Small_GTP-bd"/>
</dbReference>
<dbReference type="InterPro" id="IPR000795">
    <property type="entry name" value="T_Tr_GTP-bd_dom"/>
</dbReference>
<dbReference type="NCBIfam" id="TIGR01393">
    <property type="entry name" value="lepA"/>
    <property type="match status" value="1"/>
</dbReference>
<dbReference type="NCBIfam" id="TIGR00231">
    <property type="entry name" value="small_GTP"/>
    <property type="match status" value="1"/>
</dbReference>
<dbReference type="PANTHER" id="PTHR43512:SF4">
    <property type="entry name" value="TRANSLATION FACTOR GUF1 HOMOLOG, CHLOROPLASTIC"/>
    <property type="match status" value="1"/>
</dbReference>
<dbReference type="PANTHER" id="PTHR43512">
    <property type="entry name" value="TRANSLATION FACTOR GUF1-RELATED"/>
    <property type="match status" value="1"/>
</dbReference>
<dbReference type="Pfam" id="PF00679">
    <property type="entry name" value="EFG_C"/>
    <property type="match status" value="1"/>
</dbReference>
<dbReference type="Pfam" id="PF00009">
    <property type="entry name" value="GTP_EFTU"/>
    <property type="match status" value="1"/>
</dbReference>
<dbReference type="Pfam" id="PF03144">
    <property type="entry name" value="GTP_EFTU_D2"/>
    <property type="match status" value="1"/>
</dbReference>
<dbReference type="Pfam" id="PF06421">
    <property type="entry name" value="LepA_C"/>
    <property type="match status" value="1"/>
</dbReference>
<dbReference type="PRINTS" id="PR00315">
    <property type="entry name" value="ELONGATNFCT"/>
</dbReference>
<dbReference type="SUPFAM" id="SSF54980">
    <property type="entry name" value="EF-G C-terminal domain-like"/>
    <property type="match status" value="2"/>
</dbReference>
<dbReference type="SUPFAM" id="SSF52540">
    <property type="entry name" value="P-loop containing nucleoside triphosphate hydrolases"/>
    <property type="match status" value="1"/>
</dbReference>
<dbReference type="PROSITE" id="PS00301">
    <property type="entry name" value="G_TR_1"/>
    <property type="match status" value="1"/>
</dbReference>
<dbReference type="PROSITE" id="PS51722">
    <property type="entry name" value="G_TR_2"/>
    <property type="match status" value="1"/>
</dbReference>
<name>LEPA_BUCBP</name>
<feature type="chain" id="PRO_0000176248" description="Elongation factor 4">
    <location>
        <begin position="1"/>
        <end position="595"/>
    </location>
</feature>
<feature type="domain" description="tr-type G">
    <location>
        <begin position="2"/>
        <end position="184"/>
    </location>
</feature>
<feature type="binding site" evidence="1">
    <location>
        <begin position="14"/>
        <end position="19"/>
    </location>
    <ligand>
        <name>GTP</name>
        <dbReference type="ChEBI" id="CHEBI:37565"/>
    </ligand>
</feature>
<feature type="binding site" evidence="1">
    <location>
        <begin position="131"/>
        <end position="134"/>
    </location>
    <ligand>
        <name>GTP</name>
        <dbReference type="ChEBI" id="CHEBI:37565"/>
    </ligand>
</feature>
<protein>
    <recommendedName>
        <fullName evidence="1">Elongation factor 4</fullName>
        <shortName evidence="1">EF-4</shortName>
        <ecNumber evidence="1">3.6.5.n1</ecNumber>
    </recommendedName>
    <alternativeName>
        <fullName evidence="1">Ribosomal back-translocase LepA</fullName>
    </alternativeName>
</protein>
<accession>Q89AM5</accession>
<keyword id="KW-1003">Cell membrane</keyword>
<keyword id="KW-0342">GTP-binding</keyword>
<keyword id="KW-0378">Hydrolase</keyword>
<keyword id="KW-0472">Membrane</keyword>
<keyword id="KW-0547">Nucleotide-binding</keyword>
<keyword id="KW-0648">Protein biosynthesis</keyword>
<keyword id="KW-1185">Reference proteome</keyword>
<organism>
    <name type="scientific">Buchnera aphidicola subsp. Baizongia pistaciae (strain Bp)</name>
    <dbReference type="NCBI Taxonomy" id="224915"/>
    <lineage>
        <taxon>Bacteria</taxon>
        <taxon>Pseudomonadati</taxon>
        <taxon>Pseudomonadota</taxon>
        <taxon>Gammaproteobacteria</taxon>
        <taxon>Enterobacterales</taxon>
        <taxon>Erwiniaceae</taxon>
        <taxon>Buchnera</taxon>
    </lineage>
</organism>
<comment type="function">
    <text evidence="1">Required for accurate and efficient protein synthesis under certain stress conditions. May act as a fidelity factor of the translation reaction, by catalyzing a one-codon backward translocation of tRNAs on improperly translocated ribosomes. Back-translocation proceeds from a post-translocation (POST) complex to a pre-translocation (PRE) complex, thus giving elongation factor G a second chance to translocate the tRNAs correctly. Binds to ribosomes in a GTP-dependent manner.</text>
</comment>
<comment type="catalytic activity">
    <reaction evidence="1">
        <text>GTP + H2O = GDP + phosphate + H(+)</text>
        <dbReference type="Rhea" id="RHEA:19669"/>
        <dbReference type="ChEBI" id="CHEBI:15377"/>
        <dbReference type="ChEBI" id="CHEBI:15378"/>
        <dbReference type="ChEBI" id="CHEBI:37565"/>
        <dbReference type="ChEBI" id="CHEBI:43474"/>
        <dbReference type="ChEBI" id="CHEBI:58189"/>
        <dbReference type="EC" id="3.6.5.n1"/>
    </reaction>
</comment>
<comment type="subcellular location">
    <subcellularLocation>
        <location evidence="1">Cell membrane</location>
        <topology evidence="1">Peripheral membrane protein</topology>
        <orientation evidence="1">Cytoplasmic side</orientation>
    </subcellularLocation>
</comment>
<comment type="similarity">
    <text evidence="1">Belongs to the TRAFAC class translation factor GTPase superfamily. Classic translation factor GTPase family. LepA subfamily.</text>
</comment>
<gene>
    <name evidence="1" type="primary">lepA</name>
    <name type="ordered locus">bbp_241</name>
</gene>
<proteinExistence type="inferred from homology"/>